<keyword id="KW-0963">Cytoplasm</keyword>
<keyword id="KW-0255">Endonuclease</keyword>
<keyword id="KW-0378">Hydrolase</keyword>
<keyword id="KW-0460">Magnesium</keyword>
<keyword id="KW-0540">Nuclease</keyword>
<keyword id="KW-0690">Ribosome biogenesis</keyword>
<keyword id="KW-0694">RNA-binding</keyword>
<keyword id="KW-0698">rRNA processing</keyword>
<keyword id="KW-0699">rRNA-binding</keyword>
<name>MRNC_THEPX</name>
<accession>B0K5F7</accession>
<organism>
    <name type="scientific">Thermoanaerobacter sp. (strain X514)</name>
    <dbReference type="NCBI Taxonomy" id="399726"/>
    <lineage>
        <taxon>Bacteria</taxon>
        <taxon>Bacillati</taxon>
        <taxon>Bacillota</taxon>
        <taxon>Clostridia</taxon>
        <taxon>Thermoanaerobacterales</taxon>
        <taxon>Thermoanaerobacteraceae</taxon>
        <taxon>Thermoanaerobacter</taxon>
    </lineage>
</organism>
<sequence>MEKSMMGFLENTELLTKEGVLSLSPLVLAFIGDAVYSLYIRTKIVAQKNQPVNFLHKETVKYVKAKAQAESVKRIYDLLSEEEKDIVRRGRNMKSNTTPKGVEVQAYRYATGFEALLGYLYLAGEFERLKNILELSVQVIEE</sequence>
<reference key="1">
    <citation type="submission" date="2008-01" db="EMBL/GenBank/DDBJ databases">
        <title>Complete sequence of Thermoanaerobacter sp. X514.</title>
        <authorList>
            <consortium name="US DOE Joint Genome Institute"/>
            <person name="Copeland A."/>
            <person name="Lucas S."/>
            <person name="Lapidus A."/>
            <person name="Barry K."/>
            <person name="Glavina del Rio T."/>
            <person name="Dalin E."/>
            <person name="Tice H."/>
            <person name="Pitluck S."/>
            <person name="Bruce D."/>
            <person name="Goodwin L."/>
            <person name="Saunders E."/>
            <person name="Brettin T."/>
            <person name="Detter J.C."/>
            <person name="Han C."/>
            <person name="Schmutz J."/>
            <person name="Larimer F."/>
            <person name="Land M."/>
            <person name="Hauser L."/>
            <person name="Kyrpides N."/>
            <person name="Kim E."/>
            <person name="Hemme C."/>
            <person name="Fields M.W."/>
            <person name="He Z."/>
            <person name="Zhou J."/>
            <person name="Richardson P."/>
        </authorList>
    </citation>
    <scope>NUCLEOTIDE SEQUENCE [LARGE SCALE GENOMIC DNA]</scope>
    <source>
        <strain>X514</strain>
    </source>
</reference>
<gene>
    <name evidence="1" type="primary">mrnC</name>
    <name type="ordered locus">Teth514_0847</name>
</gene>
<feature type="chain" id="PRO_0000415997" description="Mini-ribonuclease 3">
    <location>
        <begin position="1"/>
        <end position="142"/>
    </location>
</feature>
<feature type="active site" evidence="1">
    <location>
        <position position="33"/>
    </location>
</feature>
<evidence type="ECO:0000255" key="1">
    <source>
        <dbReference type="HAMAP-Rule" id="MF_01468"/>
    </source>
</evidence>
<evidence type="ECO:0000305" key="2"/>
<protein>
    <recommendedName>
        <fullName evidence="1">Mini-ribonuclease 3</fullName>
        <shortName evidence="1">Mini-3</shortName>
        <shortName evidence="1">Mini-RNase 3</shortName>
        <ecNumber evidence="1">3.1.26.-</ecNumber>
    </recommendedName>
    <alternativeName>
        <fullName evidence="1">Mini-RNase III</fullName>
        <shortName evidence="1">Mini-III</shortName>
    </alternativeName>
</protein>
<comment type="function">
    <text evidence="1">Involved in correct processing of both the 5' and 3' ends of 23S rRNA precursor. Processes 30S rRNA precursor transcript even in absence of ribonuclease 3 (Rnc); Rnc processes 30S rRNA into smaller rRNA precursors.</text>
</comment>
<comment type="cofactor">
    <cofactor evidence="1">
        <name>Mg(2+)</name>
        <dbReference type="ChEBI" id="CHEBI:18420"/>
    </cofactor>
</comment>
<comment type="subunit">
    <text evidence="1">Homodimer.</text>
</comment>
<comment type="subcellular location">
    <subcellularLocation>
        <location evidence="1">Cytoplasm</location>
    </subcellularLocation>
</comment>
<comment type="similarity">
    <text evidence="1">Belongs to the MrnC RNase family.</text>
</comment>
<comment type="sequence caution" evidence="2">
    <conflict type="frameshift">
        <sequence resource="EMBL-CDS" id="ABY92150"/>
    </conflict>
</comment>
<dbReference type="EC" id="3.1.26.-" evidence="1"/>
<dbReference type="EMBL" id="CP000923">
    <property type="protein sequence ID" value="ABY92150.1"/>
    <property type="status" value="ALT_FRAME"/>
    <property type="molecule type" value="Genomic_DNA"/>
</dbReference>
<dbReference type="SMR" id="B0K5F7"/>
<dbReference type="KEGG" id="tex:Teth514_0847"/>
<dbReference type="HOGENOM" id="CLU_091169_2_1_9"/>
<dbReference type="Proteomes" id="UP000002155">
    <property type="component" value="Chromosome"/>
</dbReference>
<dbReference type="GO" id="GO:0005737">
    <property type="term" value="C:cytoplasm"/>
    <property type="evidence" value="ECO:0007669"/>
    <property type="project" value="UniProtKB-SubCell"/>
</dbReference>
<dbReference type="GO" id="GO:0004525">
    <property type="term" value="F:ribonuclease III activity"/>
    <property type="evidence" value="ECO:0007669"/>
    <property type="project" value="InterPro"/>
</dbReference>
<dbReference type="GO" id="GO:0019843">
    <property type="term" value="F:rRNA binding"/>
    <property type="evidence" value="ECO:0007669"/>
    <property type="project" value="UniProtKB-UniRule"/>
</dbReference>
<dbReference type="GO" id="GO:0006364">
    <property type="term" value="P:rRNA processing"/>
    <property type="evidence" value="ECO:0007669"/>
    <property type="project" value="UniProtKB-UniRule"/>
</dbReference>
<dbReference type="CDD" id="cd00593">
    <property type="entry name" value="RIBOc"/>
    <property type="match status" value="1"/>
</dbReference>
<dbReference type="Gene3D" id="1.10.1520.10">
    <property type="entry name" value="Ribonuclease III domain"/>
    <property type="match status" value="1"/>
</dbReference>
<dbReference type="HAMAP" id="MF_01468">
    <property type="entry name" value="RNase_Mini_III"/>
    <property type="match status" value="1"/>
</dbReference>
<dbReference type="InterPro" id="IPR008226">
    <property type="entry name" value="Mini3_fam"/>
</dbReference>
<dbReference type="InterPro" id="IPR000999">
    <property type="entry name" value="RNase_III_dom"/>
</dbReference>
<dbReference type="InterPro" id="IPR036389">
    <property type="entry name" value="RNase_III_sf"/>
</dbReference>
<dbReference type="PANTHER" id="PTHR34276">
    <property type="entry name" value="MINI-RIBONUCLEASE 3"/>
    <property type="match status" value="1"/>
</dbReference>
<dbReference type="PANTHER" id="PTHR34276:SF1">
    <property type="entry name" value="MINI-RIBONUCLEASE 3"/>
    <property type="match status" value="1"/>
</dbReference>
<dbReference type="Pfam" id="PF00636">
    <property type="entry name" value="Ribonuclease_3"/>
    <property type="match status" value="1"/>
</dbReference>
<dbReference type="PIRSF" id="PIRSF005520">
    <property type="entry name" value="UCP005520"/>
    <property type="match status" value="1"/>
</dbReference>
<dbReference type="SUPFAM" id="SSF69065">
    <property type="entry name" value="RNase III domain-like"/>
    <property type="match status" value="1"/>
</dbReference>
<proteinExistence type="inferred from homology"/>